<evidence type="ECO:0000250" key="1"/>
<evidence type="ECO:0000250" key="2">
    <source>
        <dbReference type="UniProtKB" id="A0A0G2K047"/>
    </source>
</evidence>
<evidence type="ECO:0000250" key="3">
    <source>
        <dbReference type="UniProtKB" id="Q14DH7"/>
    </source>
</evidence>
<evidence type="ECO:0000255" key="4"/>
<evidence type="ECO:0000305" key="5"/>
<accession>Q5REB8</accession>
<gene>
    <name type="primary">ACSS3</name>
</gene>
<sequence length="686" mass="74669">MKPSWLQCHKVTSAGGLGGPLPGSSPARGASAALRALVVPGPRGGLGGRGCRALSSGSGSEYKTHFAASVTDPERFWGKAAEQISWYKPWTKTLENKHSPSTSWFVEGMLNVCYNAVDRHIENGKGDKIAIIYDSPVTNTKATFTYKEVLEQVSKLAGVLVKHGIKKGDTVVIYMPMIPQAMYTMLACARIGAIHSLIFGGFASKELSSRIDHVKPKVVVTASFGIEPGRRVEYVPLVEEALKIGQHKPDKILIYNRPNMEAVPLAPGRDLDWDEEMAKAQSHDCVPVLSEHPLYILYTSGTTGLPKGVIRPTGGYAVMLNWSMSSIYGLQPGEVWWAASDLGWVVGHSYICYGPLLHGNTTVLYEGKPVGTPDAGAYFRVLAEHGVAALFTAPTAIRAIRQQDPGAALGKQYSLTRFKTLFVAGERCDVETLEWSKNVFRVPVLDHWWQTETGSPITASCVGLGNSKTPPPGQAGKSVPGYNVMILDDNMQKLKARCLGNIVVKLPLPPGAFSGLWKNQEAFKHLYFEKFPGYYDTMDAGYMDEEGYVYVMSRVDDVINVAGHRISAGAIEESILSHGTVADCAVVGKEDPLKGHVPLALCVLRKDINATEEQVLEEIVKHVRQNIGPVAAFRNAVFVKQLPKTRSGKIPRSALSAIVNGKPYKITSTIEDPSIFGHVEEMLKQA</sequence>
<keyword id="KW-0007">Acetylation</keyword>
<keyword id="KW-0067">ATP-binding</keyword>
<keyword id="KW-0436">Ligase</keyword>
<keyword id="KW-0443">Lipid metabolism</keyword>
<keyword id="KW-0496">Mitochondrion</keyword>
<keyword id="KW-0547">Nucleotide-binding</keyword>
<keyword id="KW-1185">Reference proteome</keyword>
<keyword id="KW-0809">Transit peptide</keyword>
<reference key="1">
    <citation type="submission" date="2004-11" db="EMBL/GenBank/DDBJ databases">
        <authorList>
            <consortium name="The German cDNA consortium"/>
        </authorList>
    </citation>
    <scope>NUCLEOTIDE SEQUENCE [LARGE SCALE MRNA]</scope>
    <source>
        <tissue>Brain cortex</tissue>
    </source>
</reference>
<proteinExistence type="evidence at transcript level"/>
<protein>
    <recommendedName>
        <fullName>Acyl-CoA synthetase short-chain family member 3, mitochondrial</fullName>
        <ecNumber evidence="2">6.2.1.1</ecNumber>
    </recommendedName>
    <alternativeName>
        <fullName>Acetate--CoA ligase 3</fullName>
    </alternativeName>
    <alternativeName>
        <fullName>Propionate--CoA ligase</fullName>
        <ecNumber evidence="2">6.2.1.17</ecNumber>
    </alternativeName>
</protein>
<feature type="transit peptide" description="Mitochondrion" evidence="4">
    <location>
        <begin position="1"/>
        <end position="29"/>
    </location>
</feature>
<feature type="chain" id="PRO_0000320626" description="Acyl-CoA synthetase short-chain family member 3, mitochondrial">
    <location>
        <begin position="30"/>
        <end position="686"/>
    </location>
</feature>
<feature type="binding site" evidence="1">
    <location>
        <begin position="227"/>
        <end position="230"/>
    </location>
    <ligand>
        <name>CoA</name>
        <dbReference type="ChEBI" id="CHEBI:57287"/>
    </ligand>
</feature>
<feature type="binding site" evidence="1">
    <location>
        <begin position="425"/>
        <end position="427"/>
    </location>
    <ligand>
        <name>ATP</name>
        <dbReference type="ChEBI" id="CHEBI:30616"/>
    </ligand>
</feature>
<feature type="binding site" evidence="1">
    <location>
        <begin position="446"/>
        <end position="451"/>
    </location>
    <ligand>
        <name>ATP</name>
        <dbReference type="ChEBI" id="CHEBI:30616"/>
    </ligand>
</feature>
<feature type="binding site" evidence="1">
    <location>
        <position position="539"/>
    </location>
    <ligand>
        <name>ATP</name>
        <dbReference type="ChEBI" id="CHEBI:30616"/>
    </ligand>
</feature>
<feature type="binding site" evidence="1">
    <location>
        <position position="554"/>
    </location>
    <ligand>
        <name>ATP</name>
        <dbReference type="ChEBI" id="CHEBI:30616"/>
    </ligand>
</feature>
<feature type="binding site" evidence="1">
    <location>
        <position position="565"/>
    </location>
    <ligand>
        <name>ATP</name>
        <dbReference type="ChEBI" id="CHEBI:30616"/>
    </ligand>
</feature>
<feature type="binding site" evidence="1">
    <location>
        <position position="624"/>
    </location>
    <ligand>
        <name>CoA</name>
        <dbReference type="ChEBI" id="CHEBI:57287"/>
    </ligand>
</feature>
<feature type="modified residue" description="N6-succinyllysine" evidence="3">
    <location>
        <position position="518"/>
    </location>
</feature>
<feature type="modified residue" description="N6-acetyllysine" evidence="3">
    <location>
        <position position="524"/>
    </location>
</feature>
<name>ACSS3_PONAB</name>
<comment type="function">
    <text evidence="2">Catalyzes the synthesis of acetyl-CoA from short-chain fatty acids (By similarity). Propionate is the preferred substrate but can also utilize acetate and butyrate with a much lower affinity.</text>
</comment>
<comment type="catalytic activity">
    <reaction evidence="2">
        <text>acetate + ATP + CoA = acetyl-CoA + AMP + diphosphate</text>
        <dbReference type="Rhea" id="RHEA:23176"/>
        <dbReference type="ChEBI" id="CHEBI:30089"/>
        <dbReference type="ChEBI" id="CHEBI:30616"/>
        <dbReference type="ChEBI" id="CHEBI:33019"/>
        <dbReference type="ChEBI" id="CHEBI:57287"/>
        <dbReference type="ChEBI" id="CHEBI:57288"/>
        <dbReference type="ChEBI" id="CHEBI:456215"/>
        <dbReference type="EC" id="6.2.1.1"/>
    </reaction>
    <physiologicalReaction direction="left-to-right" evidence="2">
        <dbReference type="Rhea" id="RHEA:23177"/>
    </physiologicalReaction>
</comment>
<comment type="catalytic activity">
    <reaction evidence="2">
        <text>propanoate + ATP + CoA = propanoyl-CoA + AMP + diphosphate</text>
        <dbReference type="Rhea" id="RHEA:20373"/>
        <dbReference type="ChEBI" id="CHEBI:17272"/>
        <dbReference type="ChEBI" id="CHEBI:30616"/>
        <dbReference type="ChEBI" id="CHEBI:33019"/>
        <dbReference type="ChEBI" id="CHEBI:57287"/>
        <dbReference type="ChEBI" id="CHEBI:57392"/>
        <dbReference type="ChEBI" id="CHEBI:456215"/>
        <dbReference type="EC" id="6.2.1.17"/>
    </reaction>
    <physiologicalReaction direction="left-to-right" evidence="2">
        <dbReference type="Rhea" id="RHEA:20374"/>
    </physiologicalReaction>
</comment>
<comment type="catalytic activity">
    <reaction evidence="2">
        <text>butanoate + ATP + CoA = butanoyl-CoA + AMP + diphosphate</text>
        <dbReference type="Rhea" id="RHEA:46172"/>
        <dbReference type="ChEBI" id="CHEBI:17968"/>
        <dbReference type="ChEBI" id="CHEBI:30616"/>
        <dbReference type="ChEBI" id="CHEBI:33019"/>
        <dbReference type="ChEBI" id="CHEBI:57287"/>
        <dbReference type="ChEBI" id="CHEBI:57371"/>
        <dbReference type="ChEBI" id="CHEBI:456215"/>
    </reaction>
    <physiologicalReaction direction="left-to-right" evidence="2">
        <dbReference type="Rhea" id="RHEA:46173"/>
    </physiologicalReaction>
</comment>
<comment type="subcellular location">
    <subcellularLocation>
        <location evidence="2">Mitochondrion matrix</location>
    </subcellularLocation>
</comment>
<comment type="similarity">
    <text evidence="5">Belongs to the ATP-dependent AMP-binding enzyme family.</text>
</comment>
<dbReference type="EC" id="6.2.1.1" evidence="2"/>
<dbReference type="EC" id="6.2.1.17" evidence="2"/>
<dbReference type="EMBL" id="CR857614">
    <property type="protein sequence ID" value="CAH89889.1"/>
    <property type="molecule type" value="mRNA"/>
</dbReference>
<dbReference type="RefSeq" id="NP_001124881.1">
    <property type="nucleotide sequence ID" value="NM_001131409.1"/>
</dbReference>
<dbReference type="SMR" id="Q5REB8"/>
<dbReference type="FunCoup" id="Q5REB8">
    <property type="interactions" value="962"/>
</dbReference>
<dbReference type="STRING" id="9601.ENSPPYP00000005476"/>
<dbReference type="GeneID" id="100171746"/>
<dbReference type="KEGG" id="pon:100171746"/>
<dbReference type="CTD" id="79611"/>
<dbReference type="eggNOG" id="KOG1175">
    <property type="taxonomic scope" value="Eukaryota"/>
</dbReference>
<dbReference type="InParanoid" id="Q5REB8"/>
<dbReference type="OrthoDB" id="10253869at2759"/>
<dbReference type="Proteomes" id="UP000001595">
    <property type="component" value="Unplaced"/>
</dbReference>
<dbReference type="GO" id="GO:0005759">
    <property type="term" value="C:mitochondrial matrix"/>
    <property type="evidence" value="ECO:0000250"/>
    <property type="project" value="UniProtKB"/>
</dbReference>
<dbReference type="GO" id="GO:0003987">
    <property type="term" value="F:acetate-CoA ligase activity"/>
    <property type="evidence" value="ECO:0000250"/>
    <property type="project" value="UniProtKB"/>
</dbReference>
<dbReference type="GO" id="GO:0005524">
    <property type="term" value="F:ATP binding"/>
    <property type="evidence" value="ECO:0007669"/>
    <property type="project" value="UniProtKB-KW"/>
</dbReference>
<dbReference type="GO" id="GO:0031956">
    <property type="term" value="F:medium-chain fatty acid-CoA ligase activity"/>
    <property type="evidence" value="ECO:0000250"/>
    <property type="project" value="UniProtKB"/>
</dbReference>
<dbReference type="GO" id="GO:0050218">
    <property type="term" value="F:propionate-CoA ligase activity"/>
    <property type="evidence" value="ECO:0000250"/>
    <property type="project" value="UniProtKB"/>
</dbReference>
<dbReference type="GO" id="GO:0006629">
    <property type="term" value="P:lipid metabolic process"/>
    <property type="evidence" value="ECO:0007669"/>
    <property type="project" value="UniProtKB-KW"/>
</dbReference>
<dbReference type="CDD" id="cd05967">
    <property type="entry name" value="PrpE"/>
    <property type="match status" value="1"/>
</dbReference>
<dbReference type="FunFam" id="3.40.50.12780:FF:000011">
    <property type="entry name" value="Acetyl-coenzyme A synthetase 2-like, mitochondrial"/>
    <property type="match status" value="1"/>
</dbReference>
<dbReference type="FunFam" id="3.30.300.30:FF:000017">
    <property type="entry name" value="Acyl-CoA synthetase short-chain family member 3"/>
    <property type="match status" value="1"/>
</dbReference>
<dbReference type="Gene3D" id="3.30.300.30">
    <property type="match status" value="1"/>
</dbReference>
<dbReference type="Gene3D" id="3.40.50.12780">
    <property type="entry name" value="N-terminal domain of ligase-like"/>
    <property type="match status" value="1"/>
</dbReference>
<dbReference type="InterPro" id="IPR032387">
    <property type="entry name" value="ACAS_N"/>
</dbReference>
<dbReference type="InterPro" id="IPR025110">
    <property type="entry name" value="AMP-bd_C"/>
</dbReference>
<dbReference type="InterPro" id="IPR045851">
    <property type="entry name" value="AMP-bd_C_sf"/>
</dbReference>
<dbReference type="InterPro" id="IPR020845">
    <property type="entry name" value="AMP-binding_CS"/>
</dbReference>
<dbReference type="InterPro" id="IPR000873">
    <property type="entry name" value="AMP-dep_synth/lig_dom"/>
</dbReference>
<dbReference type="InterPro" id="IPR042099">
    <property type="entry name" value="ANL_N_sf"/>
</dbReference>
<dbReference type="PANTHER" id="PTHR43347">
    <property type="entry name" value="ACYL-COA SYNTHETASE"/>
    <property type="match status" value="1"/>
</dbReference>
<dbReference type="PANTHER" id="PTHR43347:SF3">
    <property type="entry name" value="ACYL-COA SYNTHETASE SHORT-CHAIN FAMILY MEMBER 3, MITOCHONDRIAL"/>
    <property type="match status" value="1"/>
</dbReference>
<dbReference type="Pfam" id="PF16177">
    <property type="entry name" value="ACAS_N"/>
    <property type="match status" value="1"/>
</dbReference>
<dbReference type="Pfam" id="PF00501">
    <property type="entry name" value="AMP-binding"/>
    <property type="match status" value="1"/>
</dbReference>
<dbReference type="Pfam" id="PF13193">
    <property type="entry name" value="AMP-binding_C"/>
    <property type="match status" value="1"/>
</dbReference>
<dbReference type="SUPFAM" id="SSF56801">
    <property type="entry name" value="Acetyl-CoA synthetase-like"/>
    <property type="match status" value="1"/>
</dbReference>
<dbReference type="PROSITE" id="PS00455">
    <property type="entry name" value="AMP_BINDING"/>
    <property type="match status" value="1"/>
</dbReference>
<organism>
    <name type="scientific">Pongo abelii</name>
    <name type="common">Sumatran orangutan</name>
    <name type="synonym">Pongo pygmaeus abelii</name>
    <dbReference type="NCBI Taxonomy" id="9601"/>
    <lineage>
        <taxon>Eukaryota</taxon>
        <taxon>Metazoa</taxon>
        <taxon>Chordata</taxon>
        <taxon>Craniata</taxon>
        <taxon>Vertebrata</taxon>
        <taxon>Euteleostomi</taxon>
        <taxon>Mammalia</taxon>
        <taxon>Eutheria</taxon>
        <taxon>Euarchontoglires</taxon>
        <taxon>Primates</taxon>
        <taxon>Haplorrhini</taxon>
        <taxon>Catarrhini</taxon>
        <taxon>Hominidae</taxon>
        <taxon>Pongo</taxon>
    </lineage>
</organism>